<reference key="1">
    <citation type="journal article" date="2000" name="DNA Res.">
        <title>Prediction of the coding sequences of unidentified human genes. XVII. The complete sequences of 100 new cDNA clones from brain which code for large proteins in vitro.</title>
        <authorList>
            <person name="Nagase T."/>
            <person name="Kikuno R."/>
            <person name="Ishikawa K."/>
            <person name="Hirosawa M."/>
            <person name="Ohara O."/>
        </authorList>
    </citation>
    <scope>NUCLEOTIDE SEQUENCE [LARGE SCALE MRNA]</scope>
    <source>
        <tissue>Brain</tissue>
    </source>
</reference>
<reference key="2">
    <citation type="journal article" date="2006" name="Nature">
        <title>The DNA sequence and biological annotation of human chromosome 1.</title>
        <authorList>
            <person name="Gregory S.G."/>
            <person name="Barlow K.F."/>
            <person name="McLay K.E."/>
            <person name="Kaul R."/>
            <person name="Swarbreck D."/>
            <person name="Dunham A."/>
            <person name="Scott C.E."/>
            <person name="Howe K.L."/>
            <person name="Woodfine K."/>
            <person name="Spencer C.C.A."/>
            <person name="Jones M.C."/>
            <person name="Gillson C."/>
            <person name="Searle S."/>
            <person name="Zhou Y."/>
            <person name="Kokocinski F."/>
            <person name="McDonald L."/>
            <person name="Evans R."/>
            <person name="Phillips K."/>
            <person name="Atkinson A."/>
            <person name="Cooper R."/>
            <person name="Jones C."/>
            <person name="Hall R.E."/>
            <person name="Andrews T.D."/>
            <person name="Lloyd C."/>
            <person name="Ainscough R."/>
            <person name="Almeida J.P."/>
            <person name="Ambrose K.D."/>
            <person name="Anderson F."/>
            <person name="Andrew R.W."/>
            <person name="Ashwell R.I.S."/>
            <person name="Aubin K."/>
            <person name="Babbage A.K."/>
            <person name="Bagguley C.L."/>
            <person name="Bailey J."/>
            <person name="Beasley H."/>
            <person name="Bethel G."/>
            <person name="Bird C.P."/>
            <person name="Bray-Allen S."/>
            <person name="Brown J.Y."/>
            <person name="Brown A.J."/>
            <person name="Buckley D."/>
            <person name="Burton J."/>
            <person name="Bye J."/>
            <person name="Carder C."/>
            <person name="Chapman J.C."/>
            <person name="Clark S.Y."/>
            <person name="Clarke G."/>
            <person name="Clee C."/>
            <person name="Cobley V."/>
            <person name="Collier R.E."/>
            <person name="Corby N."/>
            <person name="Coville G.J."/>
            <person name="Davies J."/>
            <person name="Deadman R."/>
            <person name="Dunn M."/>
            <person name="Earthrowl M."/>
            <person name="Ellington A.G."/>
            <person name="Errington H."/>
            <person name="Frankish A."/>
            <person name="Frankland J."/>
            <person name="French L."/>
            <person name="Garner P."/>
            <person name="Garnett J."/>
            <person name="Gay L."/>
            <person name="Ghori M.R.J."/>
            <person name="Gibson R."/>
            <person name="Gilby L.M."/>
            <person name="Gillett W."/>
            <person name="Glithero R.J."/>
            <person name="Grafham D.V."/>
            <person name="Griffiths C."/>
            <person name="Griffiths-Jones S."/>
            <person name="Grocock R."/>
            <person name="Hammond S."/>
            <person name="Harrison E.S.I."/>
            <person name="Hart E."/>
            <person name="Haugen E."/>
            <person name="Heath P.D."/>
            <person name="Holmes S."/>
            <person name="Holt K."/>
            <person name="Howden P.J."/>
            <person name="Hunt A.R."/>
            <person name="Hunt S.E."/>
            <person name="Hunter G."/>
            <person name="Isherwood J."/>
            <person name="James R."/>
            <person name="Johnson C."/>
            <person name="Johnson D."/>
            <person name="Joy A."/>
            <person name="Kay M."/>
            <person name="Kershaw J.K."/>
            <person name="Kibukawa M."/>
            <person name="Kimberley A.M."/>
            <person name="King A."/>
            <person name="Knights A.J."/>
            <person name="Lad H."/>
            <person name="Laird G."/>
            <person name="Lawlor S."/>
            <person name="Leongamornlert D.A."/>
            <person name="Lloyd D.M."/>
            <person name="Loveland J."/>
            <person name="Lovell J."/>
            <person name="Lush M.J."/>
            <person name="Lyne R."/>
            <person name="Martin S."/>
            <person name="Mashreghi-Mohammadi M."/>
            <person name="Matthews L."/>
            <person name="Matthews N.S.W."/>
            <person name="McLaren S."/>
            <person name="Milne S."/>
            <person name="Mistry S."/>
            <person name="Moore M.J.F."/>
            <person name="Nickerson T."/>
            <person name="O'Dell C.N."/>
            <person name="Oliver K."/>
            <person name="Palmeiri A."/>
            <person name="Palmer S.A."/>
            <person name="Parker A."/>
            <person name="Patel D."/>
            <person name="Pearce A.V."/>
            <person name="Peck A.I."/>
            <person name="Pelan S."/>
            <person name="Phelps K."/>
            <person name="Phillimore B.J."/>
            <person name="Plumb R."/>
            <person name="Rajan J."/>
            <person name="Raymond C."/>
            <person name="Rouse G."/>
            <person name="Saenphimmachak C."/>
            <person name="Sehra H.K."/>
            <person name="Sheridan E."/>
            <person name="Shownkeen R."/>
            <person name="Sims S."/>
            <person name="Skuce C.D."/>
            <person name="Smith M."/>
            <person name="Steward C."/>
            <person name="Subramanian S."/>
            <person name="Sycamore N."/>
            <person name="Tracey A."/>
            <person name="Tromans A."/>
            <person name="Van Helmond Z."/>
            <person name="Wall M."/>
            <person name="Wallis J.M."/>
            <person name="White S."/>
            <person name="Whitehead S.L."/>
            <person name="Wilkinson J.E."/>
            <person name="Willey D.L."/>
            <person name="Williams H."/>
            <person name="Wilming L."/>
            <person name="Wray P.W."/>
            <person name="Wu Z."/>
            <person name="Coulson A."/>
            <person name="Vaudin M."/>
            <person name="Sulston J.E."/>
            <person name="Durbin R.M."/>
            <person name="Hubbard T."/>
            <person name="Wooster R."/>
            <person name="Dunham I."/>
            <person name="Carter N.P."/>
            <person name="McVean G."/>
            <person name="Ross M.T."/>
            <person name="Harrow J."/>
            <person name="Olson M.V."/>
            <person name="Beck S."/>
            <person name="Rogers J."/>
            <person name="Bentley D.R."/>
        </authorList>
    </citation>
    <scope>NUCLEOTIDE SEQUENCE [LARGE SCALE GENOMIC DNA]</scope>
</reference>
<gene>
    <name type="primary">ZSWIM5</name>
    <name type="synonym">KIAA1511</name>
</gene>
<sequence length="1185" mass="130634">MADGGEREELLSPSPVSPAKRQCSWPSPQAHHPRGSPGAAGGGAGGVGSSCLVLGARPHLQPDSLLDCAAKTVAEKWAYERVEERFERIPEPVQRRIVYWSFPRNEREICMYSSFQYRGGPGAGAAGGAAGASPAEEGPQPPPGAAAPAGSAPGGVAAGASPGLGAGAGAAGCGGEGLPFRRGIRLLDSGSVENVLQVGFHLSGTVTELATASEPAVTYKVAISFDRCKITSVTCGCGNKDIFYCAHVVALSLYRIRKPDQVKLRLPISETLFQMNRDQLQKFIQYLITAHHTEVLPTAQKLADEILSSNSEINQVNGAPDPTAGASIDDENCWHLDEEQVKEQVKLFLSQGGYCGSGKQLNSMFAKVREMLRMRDSNGARMLTLITEQFVADPRLTLWRQQGTNMTDKCRQLWDELGALWVCIILNPHCKLEEKSCWLQQLQKWSDLDVCPLEDGNYGHELPNITNALPQSAIHSPDSLSRPRRTVFTRAIEGRELHWQDSHLQRIISSDVYTAPACQRESERLLFNSQGQPLWLEHVPTACARVDALRSHGYPKEALRLTVAIINTLRLQQQRQLEIYKHQKKELLQRGTTTITNLEGWVGHPLDPIDCLFLTLTEACRLNDDGYLEMSDMNESRPPVYQHVPVAAGSPNSSESYLSLALEVALMGLGQQRLMPEGLYAQDKVCRNEEQLLSQLQELQLDDELVQTLQKQCILLLEGGPFSGLGEVIHRESVPMHTFAKYLFSALLPHDPDLSYKLALRAMRLPVLENSASAGDTSHPHHMVSVVPSRYPRWFTLGHLESQQCELASTMLTAAKGDTLRLRTILEAIQKHIHSSSLIFKLAQDAFKIATPTDSSTDSTLLNVALELGLQVMRMTLSTLNWRRREMVRWLVTCATEVGVRALVSILQSWYTLFTPTEATSIVAATAVSHTTILRLSLDYPQREELASCARTLALQCAMKDPQSCALSALTLCEKDHIAFEAAYQIAIDAAAGGMTHSQLFTIARYMELRGYPLRAFKLASLAMSHLNLAYNQDTHPAINDVLWACALSHSLGKNELAALIPLVVKSVHCATVLSDILRRCTVTAPGLAGIPGRRSSGKLMSTDKAPLRQLLDATINAYINTTHSRLTHISPRHYGEFIEFLSKARETFLLPQDGHLQFAQFIDNLKQIYKGKKKLMLLVRERFG</sequence>
<organism>
    <name type="scientific">Homo sapiens</name>
    <name type="common">Human</name>
    <dbReference type="NCBI Taxonomy" id="9606"/>
    <lineage>
        <taxon>Eukaryota</taxon>
        <taxon>Metazoa</taxon>
        <taxon>Chordata</taxon>
        <taxon>Craniata</taxon>
        <taxon>Vertebrata</taxon>
        <taxon>Euteleostomi</taxon>
        <taxon>Mammalia</taxon>
        <taxon>Eutheria</taxon>
        <taxon>Euarchontoglires</taxon>
        <taxon>Primates</taxon>
        <taxon>Haplorrhini</taxon>
        <taxon>Catarrhini</taxon>
        <taxon>Hominidae</taxon>
        <taxon>Homo</taxon>
    </lineage>
</organism>
<name>ZSWM5_HUMAN</name>
<comment type="sequence caution" evidence="3">
    <conflict type="erroneous initiation">
        <sequence resource="EMBL-CDS" id="BAA96035"/>
    </conflict>
</comment>
<evidence type="ECO:0000255" key="1">
    <source>
        <dbReference type="PROSITE-ProRule" id="PRU00325"/>
    </source>
</evidence>
<evidence type="ECO:0000256" key="2">
    <source>
        <dbReference type="SAM" id="MobiDB-lite"/>
    </source>
</evidence>
<evidence type="ECO:0000305" key="3"/>
<feature type="chain" id="PRO_0000223103" description="Zinc finger SWIM domain-containing protein 5">
    <location>
        <begin position="1"/>
        <end position="1185"/>
    </location>
</feature>
<feature type="zinc finger region" description="SWIM-type" evidence="1">
    <location>
        <begin position="219"/>
        <end position="256"/>
    </location>
</feature>
<feature type="region of interest" description="Disordered" evidence="2">
    <location>
        <begin position="1"/>
        <end position="45"/>
    </location>
</feature>
<feature type="region of interest" description="Disordered" evidence="2">
    <location>
        <begin position="123"/>
        <end position="153"/>
    </location>
</feature>
<feature type="compositionally biased region" description="Basic and acidic residues" evidence="2">
    <location>
        <begin position="1"/>
        <end position="10"/>
    </location>
</feature>
<feature type="sequence variant" id="VAR_053770" description="In dbSNP:rs12733746.">
    <original>V</original>
    <variation>G</variation>
    <location>
        <position position="368"/>
    </location>
</feature>
<proteinExistence type="evidence at protein level"/>
<dbReference type="EMBL" id="AB040944">
    <property type="protein sequence ID" value="BAA96035.1"/>
    <property type="status" value="ALT_INIT"/>
    <property type="molecule type" value="mRNA"/>
</dbReference>
<dbReference type="EMBL" id="AL592294">
    <property type="status" value="NOT_ANNOTATED_CDS"/>
    <property type="molecule type" value="Genomic_DNA"/>
</dbReference>
<dbReference type="EMBL" id="AL359473">
    <property type="status" value="NOT_ANNOTATED_CDS"/>
    <property type="molecule type" value="Genomic_DNA"/>
</dbReference>
<dbReference type="CCDS" id="CCDS41319.1"/>
<dbReference type="RefSeq" id="NP_065934.1">
    <property type="nucleotide sequence ID" value="NM_020883.2"/>
</dbReference>
<dbReference type="BioGRID" id="121680">
    <property type="interactions" value="6"/>
</dbReference>
<dbReference type="FunCoup" id="Q9P217">
    <property type="interactions" value="55"/>
</dbReference>
<dbReference type="STRING" id="9606.ENSP00000352614"/>
<dbReference type="GlyGen" id="Q9P217">
    <property type="glycosylation" value="2 sites, 1 O-linked glycan (1 site)"/>
</dbReference>
<dbReference type="iPTMnet" id="Q9P217"/>
<dbReference type="PhosphoSitePlus" id="Q9P217"/>
<dbReference type="BioMuta" id="ZSWIM5"/>
<dbReference type="DMDM" id="41018482"/>
<dbReference type="jPOST" id="Q9P217"/>
<dbReference type="MassIVE" id="Q9P217"/>
<dbReference type="PaxDb" id="9606-ENSP00000352614"/>
<dbReference type="PeptideAtlas" id="Q9P217"/>
<dbReference type="ProteomicsDB" id="83708"/>
<dbReference type="Antibodypedia" id="2902">
    <property type="antibodies" value="69 antibodies from 15 providers"/>
</dbReference>
<dbReference type="DNASU" id="57643"/>
<dbReference type="Ensembl" id="ENST00000359600.6">
    <property type="protein sequence ID" value="ENSP00000352614.5"/>
    <property type="gene ID" value="ENSG00000162415.7"/>
</dbReference>
<dbReference type="GeneID" id="57643"/>
<dbReference type="KEGG" id="hsa:57643"/>
<dbReference type="MANE-Select" id="ENST00000359600.6">
    <property type="protein sequence ID" value="ENSP00000352614.5"/>
    <property type="RefSeq nucleotide sequence ID" value="NM_020883.2"/>
    <property type="RefSeq protein sequence ID" value="NP_065934.1"/>
</dbReference>
<dbReference type="UCSC" id="uc001cnd.3">
    <property type="organism name" value="human"/>
</dbReference>
<dbReference type="AGR" id="HGNC:29299"/>
<dbReference type="CTD" id="57643"/>
<dbReference type="DisGeNET" id="57643"/>
<dbReference type="GeneCards" id="ZSWIM5"/>
<dbReference type="HGNC" id="HGNC:29299">
    <property type="gene designation" value="ZSWIM5"/>
</dbReference>
<dbReference type="HPA" id="ENSG00000162415">
    <property type="expression patterns" value="Low tissue specificity"/>
</dbReference>
<dbReference type="MIM" id="620132">
    <property type="type" value="gene"/>
</dbReference>
<dbReference type="neXtProt" id="NX_Q9P217"/>
<dbReference type="OpenTargets" id="ENSG00000162415"/>
<dbReference type="PharmGKB" id="PA134981647"/>
<dbReference type="VEuPathDB" id="HostDB:ENSG00000162415"/>
<dbReference type="eggNOG" id="KOG3615">
    <property type="taxonomic scope" value="Eukaryota"/>
</dbReference>
<dbReference type="GeneTree" id="ENSGT00940000158362"/>
<dbReference type="HOGENOM" id="CLU_005301_1_0_1"/>
<dbReference type="InParanoid" id="Q9P217"/>
<dbReference type="OMA" id="WIGHALD"/>
<dbReference type="OrthoDB" id="10013584at2759"/>
<dbReference type="PAN-GO" id="Q9P217">
    <property type="GO annotations" value="1 GO annotation based on evolutionary models"/>
</dbReference>
<dbReference type="PhylomeDB" id="Q9P217"/>
<dbReference type="TreeFam" id="TF324881"/>
<dbReference type="PathwayCommons" id="Q9P217"/>
<dbReference type="BioGRID-ORCS" id="57643">
    <property type="hits" value="11 hits in 1149 CRISPR screens"/>
</dbReference>
<dbReference type="ChiTaRS" id="ZSWIM5">
    <property type="organism name" value="human"/>
</dbReference>
<dbReference type="GenomeRNAi" id="57643"/>
<dbReference type="Pharos" id="Q9P217">
    <property type="development level" value="Tdark"/>
</dbReference>
<dbReference type="PRO" id="PR:Q9P217"/>
<dbReference type="Proteomes" id="UP000005640">
    <property type="component" value="Chromosome 1"/>
</dbReference>
<dbReference type="RNAct" id="Q9P217">
    <property type="molecule type" value="protein"/>
</dbReference>
<dbReference type="Bgee" id="ENSG00000162415">
    <property type="expression patterns" value="Expressed in ileal mucosa and 112 other cell types or tissues"/>
</dbReference>
<dbReference type="GO" id="GO:0031462">
    <property type="term" value="C:Cul2-RING ubiquitin ligase complex"/>
    <property type="evidence" value="ECO:0000318"/>
    <property type="project" value="GO_Central"/>
</dbReference>
<dbReference type="GO" id="GO:0005615">
    <property type="term" value="C:extracellular space"/>
    <property type="evidence" value="ECO:0007005"/>
    <property type="project" value="UniProtKB"/>
</dbReference>
<dbReference type="GO" id="GO:0008270">
    <property type="term" value="F:zinc ion binding"/>
    <property type="evidence" value="ECO:0007669"/>
    <property type="project" value="UniProtKB-KW"/>
</dbReference>
<dbReference type="InterPro" id="IPR007527">
    <property type="entry name" value="Znf_SWIM"/>
</dbReference>
<dbReference type="InterPro" id="IPR048370">
    <property type="entry name" value="ZSWIM4-8_C"/>
</dbReference>
<dbReference type="PANTHER" id="PTHR22619">
    <property type="entry name" value="ZINC FINGER SWIM DOMAIN CONTAINING PROTEIN 4, 5, 6"/>
    <property type="match status" value="1"/>
</dbReference>
<dbReference type="PANTHER" id="PTHR22619:SF2">
    <property type="entry name" value="ZINC FINGER SWIM DOMAIN-CONTAINING PROTEIN 5"/>
    <property type="match status" value="1"/>
</dbReference>
<dbReference type="Pfam" id="PF21055">
    <property type="entry name" value="ZSWIM4-8_C"/>
    <property type="match status" value="1"/>
</dbReference>
<dbReference type="PROSITE" id="PS50966">
    <property type="entry name" value="ZF_SWIM"/>
    <property type="match status" value="1"/>
</dbReference>
<keyword id="KW-0479">Metal-binding</keyword>
<keyword id="KW-1267">Proteomics identification</keyword>
<keyword id="KW-1185">Reference proteome</keyword>
<keyword id="KW-0862">Zinc</keyword>
<keyword id="KW-0863">Zinc-finger</keyword>
<protein>
    <recommendedName>
        <fullName>Zinc finger SWIM domain-containing protein 5</fullName>
    </recommendedName>
</protein>
<accession>Q9P217</accession>
<accession>Q5SXQ9</accession>